<reference key="1">
    <citation type="journal article" date="1987" name="Mol. Biochem. Parasitol.">
        <title>Strain variation in the circumsporozoite protein gene of Plasmodium falciparum.</title>
        <authorList>
            <person name="Lockyer M.J."/>
            <person name="Schwarz R.T."/>
        </authorList>
    </citation>
    <scope>NUCLEOTIDE SEQUENCE [GENOMIC DNA]</scope>
    <scope>POLYMORPHISM</scope>
</reference>
<evidence type="ECO:0000250" key="1">
    <source>
        <dbReference type="UniProtKB" id="P02893"/>
    </source>
</evidence>
<evidence type="ECO:0000250" key="2">
    <source>
        <dbReference type="UniProtKB" id="P19597"/>
    </source>
</evidence>
<evidence type="ECO:0000250" key="3">
    <source>
        <dbReference type="UniProtKB" id="P23093"/>
    </source>
</evidence>
<evidence type="ECO:0000250" key="4">
    <source>
        <dbReference type="UniProtKB" id="Q7K740"/>
    </source>
</evidence>
<evidence type="ECO:0000255" key="5"/>
<evidence type="ECO:0000255" key="6">
    <source>
        <dbReference type="PROSITE-ProRule" id="PRU00210"/>
    </source>
</evidence>
<evidence type="ECO:0000256" key="7">
    <source>
        <dbReference type="SAM" id="MobiDB-lite"/>
    </source>
</evidence>
<evidence type="ECO:0000269" key="8">
    <source>
    </source>
</evidence>
<evidence type="ECO:0000303" key="9">
    <source>
    </source>
</evidence>
<evidence type="ECO:0000305" key="10"/>
<evidence type="ECO:0000305" key="11">
    <source>
    </source>
</evidence>
<evidence type="ECO:0007829" key="12">
    <source>
        <dbReference type="PDB" id="8FAT"/>
    </source>
</evidence>
<gene>
    <name evidence="9" type="primary">CSP</name>
</gene>
<keyword id="KW-0002">3D-structure</keyword>
<keyword id="KW-1003">Cell membrane</keyword>
<keyword id="KW-0963">Cytoplasm</keyword>
<keyword id="KW-1015">Disulfide bond</keyword>
<keyword id="KW-0325">Glycoprotein</keyword>
<keyword id="KW-0336">GPI-anchor</keyword>
<keyword id="KW-0449">Lipoprotein</keyword>
<keyword id="KW-0461">Malaria</keyword>
<keyword id="KW-0472">Membrane</keyword>
<keyword id="KW-0677">Repeat</keyword>
<keyword id="KW-0732">Signal</keyword>
<keyword id="KW-0748">Sporozoite</keyword>
<dbReference type="EMBL" id="M15505">
    <property type="protein sequence ID" value="AAA29554.1"/>
    <property type="molecule type" value="Genomic_DNA"/>
</dbReference>
<dbReference type="PIR" id="A54529">
    <property type="entry name" value="A54529"/>
</dbReference>
<dbReference type="PDB" id="7UFN">
    <property type="method" value="X-ray"/>
    <property type="resolution" value="2.20 A"/>
    <property type="chains" value="E/F=130-144"/>
</dbReference>
<dbReference type="PDB" id="7UFO">
    <property type="method" value="X-ray"/>
    <property type="resolution" value="1.80 A"/>
    <property type="chains" value="A=130-144"/>
</dbReference>
<dbReference type="PDB" id="8F95">
    <property type="method" value="X-ray"/>
    <property type="resolution" value="2.45 A"/>
    <property type="chains" value="C/P=138-149"/>
</dbReference>
<dbReference type="PDB" id="8F9S">
    <property type="method" value="X-ray"/>
    <property type="resolution" value="2.10 A"/>
    <property type="chains" value="C/P=206-217"/>
</dbReference>
<dbReference type="PDB" id="8F9T">
    <property type="method" value="X-ray"/>
    <property type="resolution" value="1.85 A"/>
    <property type="chains" value="C/P=130-145"/>
</dbReference>
<dbReference type="PDB" id="8F9U">
    <property type="method" value="X-ray"/>
    <property type="resolution" value="1.70 A"/>
    <property type="chains" value="P=130-145"/>
</dbReference>
<dbReference type="PDB" id="8F9W">
    <property type="method" value="X-ray"/>
    <property type="resolution" value="2.40 A"/>
    <property type="chains" value="O/P/Q/R=130-145"/>
</dbReference>
<dbReference type="PDB" id="8FA6">
    <property type="method" value="X-ray"/>
    <property type="resolution" value="2.60 A"/>
    <property type="chains" value="P/Q=138-149"/>
</dbReference>
<dbReference type="PDB" id="8FA8">
    <property type="method" value="X-ray"/>
    <property type="resolution" value="1.80 A"/>
    <property type="chains" value="P=206-217"/>
</dbReference>
<dbReference type="PDB" id="8FA9">
    <property type="method" value="X-ray"/>
    <property type="resolution" value="2.45 A"/>
    <property type="chains" value="P=130-145"/>
</dbReference>
<dbReference type="PDB" id="8FAT">
    <property type="method" value="X-ray"/>
    <property type="resolution" value="2.95 A"/>
    <property type="chains" value="E/F=130-145"/>
</dbReference>
<dbReference type="PDB" id="8FB7">
    <property type="method" value="X-ray"/>
    <property type="resolution" value="1.75 A"/>
    <property type="chains" value="P/Q=130-145"/>
</dbReference>
<dbReference type="PDB" id="8FBA">
    <property type="method" value="X-ray"/>
    <property type="resolution" value="1.96 A"/>
    <property type="chains" value="P/Q=138-149"/>
</dbReference>
<dbReference type="PDB" id="8FDD">
    <property type="method" value="X-ray"/>
    <property type="resolution" value="1.54 A"/>
    <property type="chains" value="P=130-145"/>
</dbReference>
<dbReference type="PDBsum" id="7UFN"/>
<dbReference type="PDBsum" id="7UFO"/>
<dbReference type="PDBsum" id="8F95"/>
<dbReference type="PDBsum" id="8F9S"/>
<dbReference type="PDBsum" id="8F9T"/>
<dbReference type="PDBsum" id="8F9U"/>
<dbReference type="PDBsum" id="8F9W"/>
<dbReference type="PDBsum" id="8FA6"/>
<dbReference type="PDBsum" id="8FA8"/>
<dbReference type="PDBsum" id="8FA9"/>
<dbReference type="PDBsum" id="8FAT"/>
<dbReference type="PDBsum" id="8FB7"/>
<dbReference type="PDBsum" id="8FBA"/>
<dbReference type="PDBsum" id="8FDD"/>
<dbReference type="BMRB" id="P08307"/>
<dbReference type="SMR" id="P08307"/>
<dbReference type="GlyCosmos" id="P08307">
    <property type="glycosylation" value="1 site, No reported glycans"/>
</dbReference>
<dbReference type="GO" id="GO:0009986">
    <property type="term" value="C:cell surface"/>
    <property type="evidence" value="ECO:0007669"/>
    <property type="project" value="InterPro"/>
</dbReference>
<dbReference type="GO" id="GO:0005737">
    <property type="term" value="C:cytoplasm"/>
    <property type="evidence" value="ECO:0007669"/>
    <property type="project" value="UniProtKB-SubCell"/>
</dbReference>
<dbReference type="GO" id="GO:0005886">
    <property type="term" value="C:plasma membrane"/>
    <property type="evidence" value="ECO:0007669"/>
    <property type="project" value="UniProtKB-SubCell"/>
</dbReference>
<dbReference type="GO" id="GO:0098552">
    <property type="term" value="C:side of membrane"/>
    <property type="evidence" value="ECO:0007669"/>
    <property type="project" value="UniProtKB-KW"/>
</dbReference>
<dbReference type="Gene3D" id="2.20.100.10">
    <property type="entry name" value="Thrombospondin type-1 (TSP1) repeat"/>
    <property type="match status" value="1"/>
</dbReference>
<dbReference type="InterPro" id="IPR003067">
    <property type="entry name" value="Crcmsprzoite"/>
</dbReference>
<dbReference type="InterPro" id="IPR051860">
    <property type="entry name" value="Plasmodium_CSP_Invasion"/>
</dbReference>
<dbReference type="InterPro" id="IPR000884">
    <property type="entry name" value="TSP1_rpt"/>
</dbReference>
<dbReference type="InterPro" id="IPR036383">
    <property type="entry name" value="TSP1_rpt_sf"/>
</dbReference>
<dbReference type="PANTHER" id="PTHR44826">
    <property type="entry name" value="SPORE COAT PROTEIN SP85"/>
    <property type="match status" value="1"/>
</dbReference>
<dbReference type="PANTHER" id="PTHR44826:SF3">
    <property type="entry name" value="SPORE COAT PROTEIN SP85"/>
    <property type="match status" value="1"/>
</dbReference>
<dbReference type="Pfam" id="PF00090">
    <property type="entry name" value="TSP_1"/>
    <property type="match status" value="1"/>
</dbReference>
<dbReference type="PRINTS" id="PR01303">
    <property type="entry name" value="CRCMSPRZOITE"/>
</dbReference>
<dbReference type="SMART" id="SM00209">
    <property type="entry name" value="TSP1"/>
    <property type="match status" value="1"/>
</dbReference>
<dbReference type="SUPFAM" id="SSF82895">
    <property type="entry name" value="TSP-1 type 1 repeat"/>
    <property type="match status" value="1"/>
</dbReference>
<dbReference type="PROSITE" id="PS50092">
    <property type="entry name" value="TSP1"/>
    <property type="match status" value="1"/>
</dbReference>
<protein>
    <recommendedName>
        <fullName evidence="9">Circumsporozoite protein</fullName>
        <shortName evidence="1">CS</shortName>
    </recommendedName>
    <component>
        <recommendedName>
            <fullName evidence="10">Circumsporozoite protein C-terminus</fullName>
        </recommendedName>
    </component>
</protein>
<name>CSP_PLAFW</name>
<feature type="signal peptide" evidence="5">
    <location>
        <begin position="1"/>
        <end position="18"/>
    </location>
</feature>
<feature type="chain" id="PRO_0000024529" description="Circumsporozoite protein" evidence="5">
    <location>
        <begin position="19"/>
        <end position="419"/>
    </location>
</feature>
<feature type="chain" id="PRO_0000455492" description="Circumsporozoite protein C-terminus" evidence="3">
    <location>
        <begin status="unknown"/>
        <end position="419"/>
    </location>
</feature>
<feature type="propeptide" id="PRO_0000455493" description="Removed in mature form" evidence="5">
    <location>
        <begin position="420"/>
        <end position="442"/>
    </location>
</feature>
<feature type="repeat" description="1" evidence="11">
    <location>
        <begin position="134"/>
        <end position="137"/>
    </location>
</feature>
<feature type="repeat" description="2" evidence="11">
    <location>
        <begin position="138"/>
        <end position="141"/>
    </location>
</feature>
<feature type="repeat" description="3" evidence="11">
    <location>
        <begin position="142"/>
        <end position="145"/>
    </location>
</feature>
<feature type="repeat" description="4" evidence="11">
    <location>
        <begin position="146"/>
        <end position="149"/>
    </location>
</feature>
<feature type="repeat" description="5" evidence="11">
    <location>
        <begin position="150"/>
        <end position="153"/>
    </location>
</feature>
<feature type="repeat" description="6" evidence="11">
    <location>
        <begin position="154"/>
        <end position="157"/>
    </location>
</feature>
<feature type="repeat" description="7" evidence="11">
    <location>
        <begin position="158"/>
        <end position="161"/>
    </location>
</feature>
<feature type="repeat" description="8" evidence="11">
    <location>
        <begin position="162"/>
        <end position="165"/>
    </location>
</feature>
<feature type="repeat" description="9" evidence="11">
    <location>
        <begin position="166"/>
        <end position="169"/>
    </location>
</feature>
<feature type="repeat" description="10" evidence="11">
    <location>
        <begin position="170"/>
        <end position="173"/>
    </location>
</feature>
<feature type="repeat" description="11" evidence="11">
    <location>
        <begin position="174"/>
        <end position="177"/>
    </location>
</feature>
<feature type="repeat" description="12" evidence="11">
    <location>
        <begin position="178"/>
        <end position="181"/>
    </location>
</feature>
<feature type="repeat" description="13" evidence="11">
    <location>
        <begin position="182"/>
        <end position="185"/>
    </location>
</feature>
<feature type="repeat" description="14" evidence="11">
    <location>
        <begin position="186"/>
        <end position="189"/>
    </location>
</feature>
<feature type="repeat" description="15" evidence="11">
    <location>
        <begin position="190"/>
        <end position="193"/>
    </location>
</feature>
<feature type="repeat" description="16" evidence="11">
    <location>
        <begin position="194"/>
        <end position="197"/>
    </location>
</feature>
<feature type="repeat" description="17" evidence="11">
    <location>
        <begin position="198"/>
        <end position="201"/>
    </location>
</feature>
<feature type="repeat" description="18" evidence="11">
    <location>
        <begin position="202"/>
        <end position="205"/>
    </location>
</feature>
<feature type="repeat" description="19" evidence="11">
    <location>
        <begin position="206"/>
        <end position="209"/>
    </location>
</feature>
<feature type="repeat" description="20" evidence="11">
    <location>
        <begin position="210"/>
        <end position="213"/>
    </location>
</feature>
<feature type="repeat" description="21" evidence="11">
    <location>
        <begin position="214"/>
        <end position="217"/>
    </location>
</feature>
<feature type="repeat" description="22" evidence="11">
    <location>
        <begin position="218"/>
        <end position="221"/>
    </location>
</feature>
<feature type="repeat" description="23" evidence="11">
    <location>
        <begin position="222"/>
        <end position="225"/>
    </location>
</feature>
<feature type="repeat" description="24" evidence="11">
    <location>
        <begin position="226"/>
        <end position="229"/>
    </location>
</feature>
<feature type="repeat" description="25" evidence="11">
    <location>
        <begin position="230"/>
        <end position="233"/>
    </location>
</feature>
<feature type="repeat" description="26" evidence="11">
    <location>
        <begin position="234"/>
        <end position="237"/>
    </location>
</feature>
<feature type="repeat" description="27" evidence="11">
    <location>
        <begin position="238"/>
        <end position="241"/>
    </location>
</feature>
<feature type="repeat" description="28" evidence="11">
    <location>
        <begin position="242"/>
        <end position="245"/>
    </location>
</feature>
<feature type="repeat" description="29" evidence="11">
    <location>
        <begin position="246"/>
        <end position="249"/>
    </location>
</feature>
<feature type="repeat" description="30" evidence="11">
    <location>
        <begin position="250"/>
        <end position="253"/>
    </location>
</feature>
<feature type="repeat" description="31" evidence="11">
    <location>
        <begin position="254"/>
        <end position="257"/>
    </location>
</feature>
<feature type="repeat" description="32" evidence="11">
    <location>
        <begin position="258"/>
        <end position="261"/>
    </location>
</feature>
<feature type="repeat" description="33" evidence="11">
    <location>
        <begin position="262"/>
        <end position="265"/>
    </location>
</feature>
<feature type="repeat" description="34" evidence="11">
    <location>
        <begin position="266"/>
        <end position="269"/>
    </location>
</feature>
<feature type="repeat" description="35" evidence="11">
    <location>
        <begin position="270"/>
        <end position="273"/>
    </location>
</feature>
<feature type="repeat" description="36" evidence="11">
    <location>
        <begin position="274"/>
        <end position="277"/>
    </location>
</feature>
<feature type="repeat" description="37" evidence="11">
    <location>
        <begin position="278"/>
        <end position="281"/>
    </location>
</feature>
<feature type="repeat" description="38" evidence="11">
    <location>
        <begin position="282"/>
        <end position="285"/>
    </location>
</feature>
<feature type="repeat" description="39" evidence="11">
    <location>
        <begin position="286"/>
        <end position="289"/>
    </location>
</feature>
<feature type="repeat" description="40" evidence="11">
    <location>
        <begin position="290"/>
        <end position="293"/>
    </location>
</feature>
<feature type="repeat" description="41" evidence="11">
    <location>
        <begin position="294"/>
        <end position="297"/>
    </location>
</feature>
<feature type="repeat" description="42" evidence="11">
    <location>
        <begin position="298"/>
        <end position="301"/>
    </location>
</feature>
<feature type="repeat" description="43" evidence="11">
    <location>
        <begin position="302"/>
        <end position="305"/>
    </location>
</feature>
<feature type="repeat" description="44" evidence="11">
    <location>
        <begin position="306"/>
        <end position="309"/>
    </location>
</feature>
<feature type="repeat" description="45" evidence="11">
    <location>
        <begin position="310"/>
        <end position="313"/>
    </location>
</feature>
<feature type="repeat" description="46" evidence="11">
    <location>
        <begin position="314"/>
        <end position="317"/>
    </location>
</feature>
<feature type="domain" description="TSP type-1" evidence="6">
    <location>
        <begin position="367"/>
        <end position="420"/>
    </location>
</feature>
<feature type="region of interest" description="Disordered" evidence="7">
    <location>
        <begin position="69"/>
        <end position="357"/>
    </location>
</feature>
<feature type="region of interest" description="Required for the binding to heparan sulfate proteoglycans (HSPGs) on the surface of host hepatocytes" evidence="4">
    <location>
        <begin position="114"/>
        <end position="121"/>
    </location>
</feature>
<feature type="region of interest" description="Region I; contains the proteolytic cleavage site" evidence="3">
    <location>
        <begin position="122"/>
        <end position="126"/>
    </location>
</feature>
<feature type="region of interest" description="46 X 4 AA tandem repeats of N-[AV]-[ND]-P" evidence="11">
    <location>
        <begin position="134"/>
        <end position="317"/>
    </location>
</feature>
<feature type="compositionally biased region" description="Low complexity" evidence="7">
    <location>
        <begin position="81"/>
        <end position="94"/>
    </location>
</feature>
<feature type="compositionally biased region" description="Basic and acidic residues" evidence="7">
    <location>
        <begin position="95"/>
        <end position="115"/>
    </location>
</feature>
<feature type="compositionally biased region" description="Low complexity" evidence="7">
    <location>
        <begin position="130"/>
        <end position="318"/>
    </location>
</feature>
<feature type="compositionally biased region" description="Polar residues" evidence="7">
    <location>
        <begin position="319"/>
        <end position="334"/>
    </location>
</feature>
<feature type="compositionally biased region" description="Low complexity" evidence="7">
    <location>
        <begin position="340"/>
        <end position="354"/>
    </location>
</feature>
<feature type="lipid moiety-binding region" description="GPI-anchor amidated cysteine" evidence="5">
    <location>
        <position position="419"/>
    </location>
</feature>
<feature type="glycosylation site" description="O-linked (Fuc) threonine" evidence="2">
    <location>
        <position position="382"/>
    </location>
</feature>
<feature type="disulfide bond" evidence="4">
    <location>
        <begin position="379"/>
        <end position="414"/>
    </location>
</feature>
<feature type="disulfide bond" evidence="4">
    <location>
        <begin position="383"/>
        <end position="419"/>
    </location>
</feature>
<feature type="turn" evidence="12">
    <location>
        <begin position="137"/>
        <end position="141"/>
    </location>
</feature>
<proteinExistence type="evidence at protein level"/>
<sequence length="442" mass="47402">MMRKLAILSVSSFLFVEALFQEYQCYGSSSNTRVLNELNYDNAGTNLYNELEMNYYGKQENWYSLKKNSRSLGENDDGDNDNGNNNNGNNNNGDNGREGKDEDKRDGNNEDNEKLRKPKHKKLKQPGDGNPDPNANPNVDPNANPNVDPNANPNANPNANPNANPNANPNANPNANPNANPNANPNANPNANPNANPNANPNANPNANPNVDPNANPNANPNANPNANPNANPNANPNANPNANPNANPNANPNANPNANPNANPNANPNANPNANPNANPNANPNANPNANPNANPNANPNANPNANPNANPNANPNKNNQGNGQGHNMPNDPNRNVDENANANNAVKNNNNEEPSDKHIEQYLKKIQNSLSTEWSPCSVTCGNGIQVRIKPGSADKPKDQLDYENDIEKKICKMEKCSSVFNVVNSSIGLIMVLSFLFLN</sequence>
<accession>P08307</accession>
<comment type="function">
    <text evidence="1 3">Essential sporozoite protein (By similarity). In the mosquito vector, required for sporozoite development in the oocyst, migration through the vector hemolymph and entry into the vector salivary glands (By similarity). In the vertebrate host, required for sporozoite migration through the host dermis and infection of host hepatocytes (By similarity). Binds to highly sulfated heparan sulfate proteoglycans (HSPGs) on the surface of host hepatocytes (By similarity).</text>
</comment>
<comment type="function">
    <molecule>Circumsporozoite protein C-terminus</molecule>
    <text evidence="3">In the vertebrate host, binds to highly sulfated heparan sulfate proteoglycans (HSPGs) on the surface of host hepatocytes and is required for sporozoite invasion of the host hepatocytes.</text>
</comment>
<comment type="subcellular location">
    <subcellularLocation>
        <location evidence="2">Cell membrane</location>
        <topology evidence="5">Lipid-anchor</topology>
        <topology evidence="5">GPI-anchor</topology>
    </subcellularLocation>
    <subcellularLocation>
        <location evidence="3">Cytoplasm</location>
    </subcellularLocation>
    <text evidence="3">Localizes to the cytoplasm and the cell membrane in oocysts at day 6 post infection and then gradually distributes over the entire cell surface of the sporoblast and the budding sporozoites.</text>
</comment>
<comment type="domain">
    <text evidence="3 4">The N-terminus is involved in the initial binding to heparan sulfate proteoglycans (HSPGs) on the surface of host hepatocytes (By similarity). The N-terminus masks the TSP type-1 (TSR) domain which maintains the sporozoites in a migratory state, enabling them to complete their journey to the salivary gland in the mosquito vector and then to the host liver. The unmasking of the TSP type-1 (TSR) domain when the sporozoite interacts with the host hepatocyte also protects sporozoites from host antibodies (By similarity).</text>
</comment>
<comment type="domain">
    <text evidence="3">The TSP type-1 (TSR) domain is required for sporozoite development and invasion. CSP has two conformational states, an adhesive conformation in which the TSP type-1 (TSR) domain is exposed and a nonadhesive conformation in which the TSR is masked by the N-terminus. TSR-exposed conformation occurs during sporozoite development in the oocyst in the mosquito vector and during host hepatocyte invasion. TSR-masked conformation occurs during sporozoite migration through the hemolymph to salivary glands in the mosquito vector and in the host dermis.</text>
</comment>
<comment type="domain">
    <text evidence="3">The GPI-anchor is essential for cell membrane localization and for sporozoite formation inside the oocyst.</text>
</comment>
<comment type="PTM">
    <text evidence="1 3">During host cell invasion, proteolytically cleaved at the cell membrane in the region I by a papain-like cysteine protease of parasite origin (By similarity). Cleavage is triggered by the sporozoite contact with highly sulfated heparan sulfate proteoglycans (HSPGs) present on the host hepatocyte cell surface (By similarity). Cleavage exposes the TSP type-1 (TSR) domain and is required for productive invasion of host hepatocytes but not for adhesion to the host cell membrane (By similarity). Cleavage is dispensable for sporozoite development in the oocyst, motility and for traversal of host and vector cells (By similarity).</text>
</comment>
<comment type="PTM">
    <text evidence="2">O-glycosylated; maybe by POFUT2.</text>
</comment>
<comment type="polymorphism">
    <text evidence="8">The sequence of the repeats varies across Plasmodium species and strains.</text>
</comment>
<comment type="similarity">
    <text evidence="10">Belongs to the plasmodium circumsporozoite protein family.</text>
</comment>
<organism>
    <name type="scientific">Plasmodium falciparum (isolate Wellcome)</name>
    <dbReference type="NCBI Taxonomy" id="5848"/>
    <lineage>
        <taxon>Eukaryota</taxon>
        <taxon>Sar</taxon>
        <taxon>Alveolata</taxon>
        <taxon>Apicomplexa</taxon>
        <taxon>Aconoidasida</taxon>
        <taxon>Haemosporida</taxon>
        <taxon>Plasmodiidae</taxon>
        <taxon>Plasmodium</taxon>
        <taxon>Plasmodium (Laverania)</taxon>
    </lineage>
</organism>